<organism>
    <name type="scientific">Mycobacterium tuberculosis (strain ATCC 25177 / H37Ra)</name>
    <dbReference type="NCBI Taxonomy" id="419947"/>
    <lineage>
        <taxon>Bacteria</taxon>
        <taxon>Bacillati</taxon>
        <taxon>Actinomycetota</taxon>
        <taxon>Actinomycetes</taxon>
        <taxon>Mycobacteriales</taxon>
        <taxon>Mycobacteriaceae</taxon>
        <taxon>Mycobacterium</taxon>
        <taxon>Mycobacterium tuberculosis complex</taxon>
    </lineage>
</organism>
<accession>A5U7B6</accession>
<sequence>MRFGFLLNEVLTGFRRNVTMTIAMILTTAISVGLFGGGMLVVRLADSSRAIYLDRVESQVFLTEDVSANDSSCDTTACKALREKIETRSDVKAVRFLNRQQAYDDAIRKFPQFKDVAGKDSFPASFIVKLENPEQHKDFDTAMKGQPGVLDVLNQKELIDRLFAVLDGLSNAAFAVALVQAIGAILLIANMVQVAAYTRRTEIGIMRLVGASRWYTQLPFLVEAMLAATMGVGIAVAGLMVVRALFLENALNQFYQANLIAKVDYADILFITPWLLLLGVAMSGLTAYLTLRLYVRR</sequence>
<keyword id="KW-0131">Cell cycle</keyword>
<keyword id="KW-0132">Cell division</keyword>
<keyword id="KW-1003">Cell membrane</keyword>
<keyword id="KW-0472">Membrane</keyword>
<keyword id="KW-1185">Reference proteome</keyword>
<keyword id="KW-0812">Transmembrane</keyword>
<keyword id="KW-1133">Transmembrane helix</keyword>
<comment type="function">
    <text evidence="1 3">Part of the ABC transporter FtsEX involved in cellular division.</text>
</comment>
<comment type="subunit">
    <text evidence="3">Forms a membrane-associated complex with FtsE.</text>
</comment>
<comment type="subcellular location">
    <subcellularLocation>
        <location evidence="3">Cell membrane</location>
        <topology evidence="2 3">Multi-pass membrane protein</topology>
    </subcellularLocation>
</comment>
<comment type="induction">
    <text evidence="4">Transcription is modulated as a function of mycobacterial growth and division status, maximum expression being observed in log phase cells.</text>
</comment>
<comment type="biotechnology">
    <text evidence="4">May provide a basis for developing a marker to distinguish actively replicating M.tuberculosis cells from quiescent mycobacteria.</text>
</comment>
<comment type="similarity">
    <text evidence="2">Belongs to the ABC-4 integral membrane protein family. FtsX subfamily.</text>
</comment>
<gene>
    <name evidence="6" type="primary">ftsX</name>
    <name type="ordered locus">MRA_3133</name>
</gene>
<proteinExistence type="evidence at protein level"/>
<evidence type="ECO:0000250" key="1">
    <source>
        <dbReference type="UniProtKB" id="P0AC30"/>
    </source>
</evidence>
<evidence type="ECO:0000255" key="2"/>
<evidence type="ECO:0000269" key="3">
    <source>
    </source>
</evidence>
<evidence type="ECO:0000269" key="4">
    <source>
    </source>
</evidence>
<evidence type="ECO:0000305" key="5"/>
<evidence type="ECO:0000312" key="6">
    <source>
        <dbReference type="EMBL" id="ABQ74916.1"/>
    </source>
</evidence>
<protein>
    <recommendedName>
        <fullName evidence="6">Cell division protein FtsX</fullName>
    </recommendedName>
</protein>
<feature type="chain" id="PRO_0000421662" description="Cell division protein FtsX">
    <location>
        <begin position="1"/>
        <end position="297"/>
    </location>
</feature>
<feature type="topological domain" description="Cytoplasmic" evidence="2">
    <location>
        <begin position="1"/>
        <end position="21"/>
    </location>
</feature>
<feature type="transmembrane region" description="Helical" evidence="2">
    <location>
        <begin position="22"/>
        <end position="42"/>
    </location>
</feature>
<feature type="topological domain" description="Extracellular" evidence="2">
    <location>
        <begin position="43"/>
        <end position="171"/>
    </location>
</feature>
<feature type="transmembrane region" description="Helical" evidence="2">
    <location>
        <begin position="172"/>
        <end position="192"/>
    </location>
</feature>
<feature type="topological domain" description="Cytoplasmic" evidence="2">
    <location>
        <begin position="193"/>
        <end position="219"/>
    </location>
</feature>
<feature type="transmembrane region" description="Helical" evidence="2">
    <location>
        <begin position="220"/>
        <end position="240"/>
    </location>
</feature>
<feature type="topological domain" description="Extracellular" evidence="2">
    <location>
        <begin position="241"/>
        <end position="267"/>
    </location>
</feature>
<feature type="transmembrane region" description="Helical" evidence="2">
    <location>
        <begin position="268"/>
        <end position="288"/>
    </location>
</feature>
<feature type="topological domain" description="Cytoplasmic" evidence="2">
    <location>
        <begin position="289"/>
        <end position="297"/>
    </location>
</feature>
<name>FTSX_MYCTA</name>
<dbReference type="EMBL" id="CP000611">
    <property type="protein sequence ID" value="ABQ74916.1"/>
    <property type="molecule type" value="Genomic_DNA"/>
</dbReference>
<dbReference type="RefSeq" id="WP_003416117.1">
    <property type="nucleotide sequence ID" value="NZ_CP016972.1"/>
</dbReference>
<dbReference type="SMR" id="A5U7B6"/>
<dbReference type="KEGG" id="mra:MRA_3133"/>
<dbReference type="eggNOG" id="COG2177">
    <property type="taxonomic scope" value="Bacteria"/>
</dbReference>
<dbReference type="HOGENOM" id="CLU_073546_1_0_11"/>
<dbReference type="Proteomes" id="UP000001988">
    <property type="component" value="Chromosome"/>
</dbReference>
<dbReference type="GO" id="GO:0016020">
    <property type="term" value="C:membrane"/>
    <property type="evidence" value="ECO:0000314"/>
    <property type="project" value="UniProtKB"/>
</dbReference>
<dbReference type="GO" id="GO:0005886">
    <property type="term" value="C:plasma membrane"/>
    <property type="evidence" value="ECO:0000314"/>
    <property type="project" value="UniProtKB"/>
</dbReference>
<dbReference type="GO" id="GO:0051301">
    <property type="term" value="P:cell division"/>
    <property type="evidence" value="ECO:0007669"/>
    <property type="project" value="UniProtKB-KW"/>
</dbReference>
<dbReference type="FunFam" id="3.30.70.3040:FF:000004">
    <property type="entry name" value="Cell division protein FtsX"/>
    <property type="match status" value="1"/>
</dbReference>
<dbReference type="Gene3D" id="3.30.70.3040">
    <property type="match status" value="1"/>
</dbReference>
<dbReference type="InterPro" id="IPR003838">
    <property type="entry name" value="ABC3_permease_C"/>
</dbReference>
<dbReference type="InterPro" id="IPR004513">
    <property type="entry name" value="FtsX"/>
</dbReference>
<dbReference type="InterPro" id="IPR047929">
    <property type="entry name" value="FtsX_actino"/>
</dbReference>
<dbReference type="InterPro" id="IPR040690">
    <property type="entry name" value="FtsX_ECD"/>
</dbReference>
<dbReference type="NCBIfam" id="NF038346">
    <property type="entry name" value="FtsX_actino"/>
    <property type="match status" value="1"/>
</dbReference>
<dbReference type="PANTHER" id="PTHR47755">
    <property type="entry name" value="CELL DIVISION PROTEIN FTSX"/>
    <property type="match status" value="1"/>
</dbReference>
<dbReference type="PANTHER" id="PTHR47755:SF1">
    <property type="entry name" value="CELL DIVISION PROTEIN FTSX"/>
    <property type="match status" value="1"/>
</dbReference>
<dbReference type="Pfam" id="PF02687">
    <property type="entry name" value="FtsX"/>
    <property type="match status" value="1"/>
</dbReference>
<dbReference type="Pfam" id="PF18075">
    <property type="entry name" value="FtsX_ECD"/>
    <property type="match status" value="1"/>
</dbReference>
<dbReference type="PIRSF" id="PIRSF003097">
    <property type="entry name" value="FtsX"/>
    <property type="match status" value="1"/>
</dbReference>
<reference evidence="6" key="1">
    <citation type="journal article" date="2008" name="PLoS ONE">
        <title>Genetic basis of virulence attenuation revealed by comparative genomic analysis of Mycobacterium tuberculosis strain H37Ra versus H37Rv.</title>
        <authorList>
            <person name="Zheng H."/>
            <person name="Lu L."/>
            <person name="Wang B."/>
            <person name="Pu S."/>
            <person name="Zhang X."/>
            <person name="Zhu G."/>
            <person name="Shi W."/>
            <person name="Zhang L."/>
            <person name="Wang H."/>
            <person name="Wang S."/>
            <person name="Zhao G."/>
            <person name="Zhang Y."/>
        </authorList>
    </citation>
    <scope>NUCLEOTIDE SEQUENCE [LARGE SCALE GENOMIC DNA]</scope>
    <source>
        <strain>ATCC 25177 / H37Ra</strain>
    </source>
</reference>
<reference evidence="5" key="2">
    <citation type="journal article" date="1996" name="Gene">
        <title>An M. tuberculosis DNA fragment contains genes encoding cell division proteins ftsX and ftsE, a basic protein and homologues of PemK and small protein B.</title>
        <authorList>
            <person name="Tyagi J.S."/>
            <person name="Das T.K."/>
            <person name="Kinger A.K."/>
        </authorList>
    </citation>
    <scope>INDUCTION</scope>
    <scope>BIOTECHNOLOGY</scope>
    <source>
        <strain evidence="4">ATCC 25177 / H37Ra</strain>
    </source>
</reference>
<reference evidence="5" key="3">
    <citation type="journal article" date="2006" name="Arch. Microbiol.">
        <title>Molecular characterisation of ABC transporter type FtsE and FtsX proteins of Mycobacterium tuberculosis.</title>
        <authorList>
            <person name="Mir M.A."/>
            <person name="Rajeswari H.S."/>
            <person name="Veeraraghavan U."/>
            <person name="Ajitkumar P."/>
        </authorList>
    </citation>
    <scope>FUNCTION</scope>
    <scope>INTERACTION WITH FTSE</scope>
    <scope>SUBCELLULAR LOCATION</scope>
    <source>
        <strain evidence="3">ATCC 25177 / H37Ra</strain>
    </source>
</reference>